<proteinExistence type="evidence at protein level"/>
<protein>
    <recommendedName>
        <fullName evidence="2">Protein YbgV</fullName>
    </recommendedName>
</protein>
<evidence type="ECO:0000269" key="1">
    <source>
    </source>
</evidence>
<evidence type="ECO:0000303" key="2">
    <source>
    </source>
</evidence>
<evidence type="ECO:0000312" key="3">
    <source>
        <dbReference type="EMBL" id="QNV50521.1"/>
    </source>
</evidence>
<accession>P0DSE6</accession>
<accession>A0A7H2C774</accession>
<organism>
    <name type="scientific">Escherichia coli (strain K12)</name>
    <dbReference type="NCBI Taxonomy" id="83333"/>
    <lineage>
        <taxon>Bacteria</taxon>
        <taxon>Pseudomonadati</taxon>
        <taxon>Pseudomonadota</taxon>
        <taxon>Gammaproteobacteria</taxon>
        <taxon>Enterobacterales</taxon>
        <taxon>Enterobacteriaceae</taxon>
        <taxon>Escherichia</taxon>
    </lineage>
</organism>
<gene>
    <name evidence="2" type="primary">ybgV</name>
    <name evidence="3" type="ordered locus">b4768</name>
</gene>
<reference key="1">
    <citation type="journal article" date="1997" name="Science">
        <title>The complete genome sequence of Escherichia coli K-12.</title>
        <authorList>
            <person name="Blattner F.R."/>
            <person name="Plunkett G. III"/>
            <person name="Bloch C.A."/>
            <person name="Perna N.T."/>
            <person name="Burland V."/>
            <person name="Riley M."/>
            <person name="Collado-Vides J."/>
            <person name="Glasner J.D."/>
            <person name="Rode C.K."/>
            <person name="Mayhew G.F."/>
            <person name="Gregor J."/>
            <person name="Davis N.W."/>
            <person name="Kirkpatrick H.A."/>
            <person name="Goeden M.A."/>
            <person name="Rose D.J."/>
            <person name="Mau B."/>
            <person name="Shao Y."/>
        </authorList>
    </citation>
    <scope>NUCLEOTIDE SEQUENCE [LARGE SCALE GENOMIC DNA]</scope>
    <source>
        <strain>K12 / MG1655 / ATCC 47076</strain>
    </source>
</reference>
<reference key="2">
    <citation type="journal article" date="2019" name="MBio">
        <title>Identifying small proteins by ribosome profiling with stalled initiation complexes.</title>
        <authorList>
            <person name="Weaver J."/>
            <person name="Mohammad F."/>
            <person name="Buskirk A.R."/>
            <person name="Storz G."/>
        </authorList>
    </citation>
    <scope>IDENTIFICATION</scope>
    <scope>INDUCTION</scope>
    <source>
        <strain>K12 / MG1655 / ATCC 47076</strain>
    </source>
</reference>
<feature type="chain" id="PRO_0000447142" description="Protein YbgV">
    <location>
        <begin position="1"/>
        <end position="10"/>
    </location>
</feature>
<sequence>MVDKFNNSDC</sequence>
<name>YBGV_ECOLI</name>
<keyword id="KW-1185">Reference proteome</keyword>
<dbReference type="EMBL" id="U00096">
    <property type="protein sequence ID" value="QNV50521.1"/>
    <property type="molecule type" value="Genomic_DNA"/>
</dbReference>
<dbReference type="InParanoid" id="P0DSE6"/>
<dbReference type="BioCyc" id="EcoCyc:MONOMER0-4481"/>
<dbReference type="Proteomes" id="UP000000625">
    <property type="component" value="Chromosome"/>
</dbReference>
<comment type="induction">
    <text evidence="1">Expressed equally in exponential and stationary phase in rich medium (at protein level).</text>
</comment>
<comment type="miscellaneous">
    <text evidence="1">This gene overlaps ybgU on the same strand in another reading frame.</text>
</comment>